<name>COAA_LACCB</name>
<proteinExistence type="inferred from homology"/>
<reference key="1">
    <citation type="submission" date="2008-06" db="EMBL/GenBank/DDBJ databases">
        <title>Lactobacillus casei BL23 complete genome sequence.</title>
        <authorList>
            <person name="Maze A."/>
            <person name="Boel G."/>
            <person name="Bourand A."/>
            <person name="Loux V."/>
            <person name="Gibrat J.F."/>
            <person name="Zuniga M."/>
            <person name="Hartke A."/>
            <person name="Deutscher J."/>
        </authorList>
    </citation>
    <scope>NUCLEOTIDE SEQUENCE [LARGE SCALE GENOMIC DNA]</scope>
    <source>
        <strain>BL23</strain>
    </source>
</reference>
<feature type="chain" id="PRO_1000099934" description="Pantothenate kinase">
    <location>
        <begin position="1"/>
        <end position="308"/>
    </location>
</feature>
<feature type="binding site" evidence="1">
    <location>
        <begin position="91"/>
        <end position="98"/>
    </location>
    <ligand>
        <name>ATP</name>
        <dbReference type="ChEBI" id="CHEBI:30616"/>
    </ligand>
</feature>
<gene>
    <name evidence="1" type="primary">coaA</name>
    <name type="ordered locus">LCABL_21550</name>
</gene>
<organism>
    <name type="scientific">Lacticaseibacillus casei (strain BL23)</name>
    <name type="common">Lactobacillus casei</name>
    <dbReference type="NCBI Taxonomy" id="543734"/>
    <lineage>
        <taxon>Bacteria</taxon>
        <taxon>Bacillati</taxon>
        <taxon>Bacillota</taxon>
        <taxon>Bacilli</taxon>
        <taxon>Lactobacillales</taxon>
        <taxon>Lactobacillaceae</taxon>
        <taxon>Lacticaseibacillus</taxon>
    </lineage>
</organism>
<evidence type="ECO:0000255" key="1">
    <source>
        <dbReference type="HAMAP-Rule" id="MF_00215"/>
    </source>
</evidence>
<accession>B3W953</accession>
<keyword id="KW-0067">ATP-binding</keyword>
<keyword id="KW-0173">Coenzyme A biosynthesis</keyword>
<keyword id="KW-0963">Cytoplasm</keyword>
<keyword id="KW-0418">Kinase</keyword>
<keyword id="KW-0547">Nucleotide-binding</keyword>
<keyword id="KW-0808">Transferase</keyword>
<comment type="catalytic activity">
    <reaction evidence="1">
        <text>(R)-pantothenate + ATP = (R)-4'-phosphopantothenate + ADP + H(+)</text>
        <dbReference type="Rhea" id="RHEA:16373"/>
        <dbReference type="ChEBI" id="CHEBI:10986"/>
        <dbReference type="ChEBI" id="CHEBI:15378"/>
        <dbReference type="ChEBI" id="CHEBI:29032"/>
        <dbReference type="ChEBI" id="CHEBI:30616"/>
        <dbReference type="ChEBI" id="CHEBI:456216"/>
        <dbReference type="EC" id="2.7.1.33"/>
    </reaction>
</comment>
<comment type="pathway">
    <text evidence="1">Cofactor biosynthesis; coenzyme A biosynthesis; CoA from (R)-pantothenate: step 1/5.</text>
</comment>
<comment type="subcellular location">
    <subcellularLocation>
        <location evidence="1">Cytoplasm</location>
    </subcellularLocation>
</comment>
<comment type="similarity">
    <text evidence="1">Belongs to the prokaryotic pantothenate kinase family.</text>
</comment>
<protein>
    <recommendedName>
        <fullName evidence="1">Pantothenate kinase</fullName>
        <ecNumber evidence="1">2.7.1.33</ecNumber>
    </recommendedName>
    <alternativeName>
        <fullName evidence="1">Pantothenic acid kinase</fullName>
    </alternativeName>
</protein>
<dbReference type="EC" id="2.7.1.33" evidence="1"/>
<dbReference type="EMBL" id="FM177140">
    <property type="protein sequence ID" value="CAQ67222.1"/>
    <property type="molecule type" value="Genomic_DNA"/>
</dbReference>
<dbReference type="SMR" id="B3W953"/>
<dbReference type="KEGG" id="lcb:LCABL_21550"/>
<dbReference type="HOGENOM" id="CLU_053818_1_1_9"/>
<dbReference type="UniPathway" id="UPA00241">
    <property type="reaction ID" value="UER00352"/>
</dbReference>
<dbReference type="GO" id="GO:0005737">
    <property type="term" value="C:cytoplasm"/>
    <property type="evidence" value="ECO:0007669"/>
    <property type="project" value="UniProtKB-SubCell"/>
</dbReference>
<dbReference type="GO" id="GO:0005524">
    <property type="term" value="F:ATP binding"/>
    <property type="evidence" value="ECO:0007669"/>
    <property type="project" value="UniProtKB-UniRule"/>
</dbReference>
<dbReference type="GO" id="GO:0004594">
    <property type="term" value="F:pantothenate kinase activity"/>
    <property type="evidence" value="ECO:0007669"/>
    <property type="project" value="UniProtKB-UniRule"/>
</dbReference>
<dbReference type="GO" id="GO:0015937">
    <property type="term" value="P:coenzyme A biosynthetic process"/>
    <property type="evidence" value="ECO:0007669"/>
    <property type="project" value="UniProtKB-UniRule"/>
</dbReference>
<dbReference type="CDD" id="cd02025">
    <property type="entry name" value="PanK"/>
    <property type="match status" value="1"/>
</dbReference>
<dbReference type="Gene3D" id="3.40.50.300">
    <property type="entry name" value="P-loop containing nucleotide triphosphate hydrolases"/>
    <property type="match status" value="1"/>
</dbReference>
<dbReference type="HAMAP" id="MF_00215">
    <property type="entry name" value="Pantothen_kinase_1"/>
    <property type="match status" value="1"/>
</dbReference>
<dbReference type="InterPro" id="IPR027417">
    <property type="entry name" value="P-loop_NTPase"/>
</dbReference>
<dbReference type="InterPro" id="IPR004566">
    <property type="entry name" value="PanK"/>
</dbReference>
<dbReference type="InterPro" id="IPR006083">
    <property type="entry name" value="PRK/URK"/>
</dbReference>
<dbReference type="NCBIfam" id="TIGR00554">
    <property type="entry name" value="panK_bact"/>
    <property type="match status" value="1"/>
</dbReference>
<dbReference type="PANTHER" id="PTHR10285">
    <property type="entry name" value="URIDINE KINASE"/>
    <property type="match status" value="1"/>
</dbReference>
<dbReference type="Pfam" id="PF00485">
    <property type="entry name" value="PRK"/>
    <property type="match status" value="1"/>
</dbReference>
<dbReference type="PIRSF" id="PIRSF000545">
    <property type="entry name" value="Pantothenate_kin"/>
    <property type="match status" value="1"/>
</dbReference>
<dbReference type="SUPFAM" id="SSF52540">
    <property type="entry name" value="P-loop containing nucleoside triphosphate hydrolases"/>
    <property type="match status" value="1"/>
</dbReference>
<sequence>MQSEMNYYKFDRAEWSQFHSQNFTNVTDEELAQLRSLNDEISLDDVKMIYSPLRHLIHIRYEDYQGDMFTLSRFLGMQRNPHTPFIIGIAGSVAVGKSTTARLLQLLLSRAYPEKRVQQMTTDGFLYPNAELERRGILDRKGFPESYDMELLIHFMNNVKNASGALRAPKYSHQIYDIVPGEYELIDRPDILIVEGINVLQLPSKQPIYVSDYFDFSIYVDANPDLIEQWYLERFGILLDTAFTDPNNYYYQYAIGDRADAFAMARQVWRDVNLKNLNEYILPTKNRADIILHKTTGHEIDQVSLRKW</sequence>